<organismHost>
    <name type="scientific">Bos taurus</name>
    <name type="common">Bovine</name>
    <dbReference type="NCBI Taxonomy" id="9913"/>
</organismHost>
<dbReference type="EC" id="3.6.1.15" evidence="5"/>
<dbReference type="EC" id="3.4.22.66"/>
<dbReference type="EC" id="2.7.7.48"/>
<dbReference type="EMBL" id="DQ013304">
    <property type="protein sequence ID" value="AAY60849.1"/>
    <property type="molecule type" value="Genomic_RNA"/>
</dbReference>
<dbReference type="RefSeq" id="YP_529550.1">
    <property type="nucleotide sequence ID" value="NC_007916.1"/>
</dbReference>
<dbReference type="SMR" id="Q288N7"/>
<dbReference type="KEGG" id="vg:5130542"/>
<dbReference type="Proteomes" id="UP000000668">
    <property type="component" value="Genome"/>
</dbReference>
<dbReference type="GO" id="GO:0030430">
    <property type="term" value="C:host cell cytoplasm"/>
    <property type="evidence" value="ECO:0007669"/>
    <property type="project" value="UniProtKB-SubCell"/>
</dbReference>
<dbReference type="GO" id="GO:0019028">
    <property type="term" value="C:viral capsid"/>
    <property type="evidence" value="ECO:0007669"/>
    <property type="project" value="UniProtKB-KW"/>
</dbReference>
<dbReference type="GO" id="GO:0005524">
    <property type="term" value="F:ATP binding"/>
    <property type="evidence" value="ECO:0007669"/>
    <property type="project" value="UniProtKB-KW"/>
</dbReference>
<dbReference type="GO" id="GO:0004197">
    <property type="term" value="F:cysteine-type endopeptidase activity"/>
    <property type="evidence" value="ECO:0007669"/>
    <property type="project" value="InterPro"/>
</dbReference>
<dbReference type="GO" id="GO:0017111">
    <property type="term" value="F:ribonucleoside triphosphate phosphatase activity"/>
    <property type="evidence" value="ECO:0007669"/>
    <property type="project" value="UniProtKB-EC"/>
</dbReference>
<dbReference type="GO" id="GO:0003723">
    <property type="term" value="F:RNA binding"/>
    <property type="evidence" value="ECO:0007669"/>
    <property type="project" value="InterPro"/>
</dbReference>
<dbReference type="GO" id="GO:0003724">
    <property type="term" value="F:RNA helicase activity"/>
    <property type="evidence" value="ECO:0007669"/>
    <property type="project" value="InterPro"/>
</dbReference>
<dbReference type="GO" id="GO:0003968">
    <property type="term" value="F:RNA-directed RNA polymerase activity"/>
    <property type="evidence" value="ECO:0007669"/>
    <property type="project" value="UniProtKB-KW"/>
</dbReference>
<dbReference type="GO" id="GO:0006351">
    <property type="term" value="P:DNA-templated transcription"/>
    <property type="evidence" value="ECO:0007669"/>
    <property type="project" value="InterPro"/>
</dbReference>
<dbReference type="GO" id="GO:0006508">
    <property type="term" value="P:proteolysis"/>
    <property type="evidence" value="ECO:0007669"/>
    <property type="project" value="UniProtKB-KW"/>
</dbReference>
<dbReference type="GO" id="GO:0039694">
    <property type="term" value="P:viral RNA genome replication"/>
    <property type="evidence" value="ECO:0007669"/>
    <property type="project" value="InterPro"/>
</dbReference>
<dbReference type="CDD" id="cd23192">
    <property type="entry name" value="Caliciviridae_RdRp"/>
    <property type="match status" value="1"/>
</dbReference>
<dbReference type="Gene3D" id="1.10.260.110">
    <property type="match status" value="1"/>
</dbReference>
<dbReference type="Gene3D" id="1.20.960.20">
    <property type="match status" value="1"/>
</dbReference>
<dbReference type="Gene3D" id="2.60.120.20">
    <property type="match status" value="1"/>
</dbReference>
<dbReference type="Gene3D" id="3.30.70.270">
    <property type="match status" value="1"/>
</dbReference>
<dbReference type="Gene3D" id="6.10.140.320">
    <property type="match status" value="1"/>
</dbReference>
<dbReference type="Gene3D" id="6.10.250.3230">
    <property type="match status" value="1"/>
</dbReference>
<dbReference type="Gene3D" id="3.40.50.300">
    <property type="entry name" value="P-loop containing nucleotide triphosphate hydrolases"/>
    <property type="match status" value="1"/>
</dbReference>
<dbReference type="InterPro" id="IPR004005">
    <property type="entry name" value="Calicivirus_coat"/>
</dbReference>
<dbReference type="InterPro" id="IPR043502">
    <property type="entry name" value="DNA/RNA_pol_sf"/>
</dbReference>
<dbReference type="InterPro" id="IPR004004">
    <property type="entry name" value="Helic/Pol/Pept_Calicivir-typ"/>
</dbReference>
<dbReference type="InterPro" id="IPR000605">
    <property type="entry name" value="Helicase_SF3_ssDNA/RNA_vir"/>
</dbReference>
<dbReference type="InterPro" id="IPR014759">
    <property type="entry name" value="Helicase_SF3_ssRNA_vir"/>
</dbReference>
<dbReference type="InterPro" id="IPR027417">
    <property type="entry name" value="P-loop_NTPase"/>
</dbReference>
<dbReference type="InterPro" id="IPR000317">
    <property type="entry name" value="Peptidase_C24"/>
</dbReference>
<dbReference type="InterPro" id="IPR009003">
    <property type="entry name" value="Peptidase_S1_PA"/>
</dbReference>
<dbReference type="InterPro" id="IPR043128">
    <property type="entry name" value="Rev_trsase/Diguanyl_cyclase"/>
</dbReference>
<dbReference type="InterPro" id="IPR001205">
    <property type="entry name" value="RNA-dir_pol_C"/>
</dbReference>
<dbReference type="InterPro" id="IPR007094">
    <property type="entry name" value="RNA-dir_pol_PSvirus"/>
</dbReference>
<dbReference type="InterPro" id="IPR029053">
    <property type="entry name" value="Viral_coat"/>
</dbReference>
<dbReference type="InterPro" id="IPR049434">
    <property type="entry name" value="VPg"/>
</dbReference>
<dbReference type="Pfam" id="PF00915">
    <property type="entry name" value="Calici_coat"/>
    <property type="match status" value="1"/>
</dbReference>
<dbReference type="Pfam" id="PF03510">
    <property type="entry name" value="Peptidase_C24"/>
    <property type="match status" value="1"/>
</dbReference>
<dbReference type="Pfam" id="PF00680">
    <property type="entry name" value="RdRP_1"/>
    <property type="match status" value="1"/>
</dbReference>
<dbReference type="Pfam" id="PF00910">
    <property type="entry name" value="RNA_helicase"/>
    <property type="match status" value="1"/>
</dbReference>
<dbReference type="Pfam" id="PF20915">
    <property type="entry name" value="VPg"/>
    <property type="match status" value="1"/>
</dbReference>
<dbReference type="PRINTS" id="PR00916">
    <property type="entry name" value="2CENDOPTASE"/>
</dbReference>
<dbReference type="PRINTS" id="PR00918">
    <property type="entry name" value="CALICVIRUSNS"/>
</dbReference>
<dbReference type="SUPFAM" id="SSF56672">
    <property type="entry name" value="DNA/RNA polymerases"/>
    <property type="match status" value="1"/>
</dbReference>
<dbReference type="SUPFAM" id="SSF52540">
    <property type="entry name" value="P-loop containing nucleoside triphosphate hydrolases"/>
    <property type="match status" value="1"/>
</dbReference>
<dbReference type="SUPFAM" id="SSF88633">
    <property type="entry name" value="Positive stranded ssRNA viruses"/>
    <property type="match status" value="1"/>
</dbReference>
<dbReference type="SUPFAM" id="SSF50494">
    <property type="entry name" value="Trypsin-like serine proteases"/>
    <property type="match status" value="1"/>
</dbReference>
<dbReference type="PROSITE" id="PS51894">
    <property type="entry name" value="CV_3CL_PRO"/>
    <property type="match status" value="1"/>
</dbReference>
<dbReference type="PROSITE" id="PS50507">
    <property type="entry name" value="RDRP_SSRNA_POS"/>
    <property type="match status" value="1"/>
</dbReference>
<dbReference type="PROSITE" id="PS51218">
    <property type="entry name" value="SF3_HELICASE_2"/>
    <property type="match status" value="1"/>
</dbReference>
<feature type="chain" id="PRO_0000402448" description="Genome polyprotein">
    <location>
        <begin position="1"/>
        <end position="2210"/>
    </location>
</feature>
<feature type="chain" id="PRO_0000402449" description="Protein p34" evidence="1">
    <location>
        <begin position="1"/>
        <end position="302"/>
    </location>
</feature>
<feature type="chain" id="PRO_0000402450" description="NTPase" evidence="1">
    <location>
        <begin position="303"/>
        <end position="645"/>
    </location>
</feature>
<feature type="chain" id="PRO_0000402451" description="Protein p30" evidence="1">
    <location>
        <begin position="646"/>
        <end position="925"/>
    </location>
</feature>
<feature type="chain" id="PRO_0000402452" description="Viral genome-linked protein" evidence="1">
    <location>
        <begin position="926"/>
        <end position="990"/>
    </location>
</feature>
<feature type="chain" id="PRO_0000402453" description="3C-like protease" evidence="1">
    <location>
        <begin position="991"/>
        <end position="1174"/>
    </location>
</feature>
<feature type="chain" id="PRO_0000402454" description="RNA-directed RNA polymerase" evidence="1">
    <location>
        <begin position="1175"/>
        <end position="1659"/>
    </location>
</feature>
<feature type="chain" id="PRO_0000402455" description="Capsid protein" evidence="1">
    <location>
        <begin position="1660"/>
        <end position="2210"/>
    </location>
</feature>
<feature type="domain" description="SF3 helicase" evidence="10">
    <location>
        <begin position="426"/>
        <end position="585"/>
    </location>
</feature>
<feature type="domain" description="Peptidase C24" evidence="11">
    <location>
        <begin position="991"/>
        <end position="1136"/>
    </location>
</feature>
<feature type="domain" description="RdRp catalytic" evidence="9">
    <location>
        <begin position="1379"/>
        <end position="1501"/>
    </location>
</feature>
<feature type="region of interest" description="Disordered" evidence="12">
    <location>
        <begin position="1"/>
        <end position="22"/>
    </location>
</feature>
<feature type="region of interest" description="Disordered" evidence="12">
    <location>
        <begin position="1654"/>
        <end position="1686"/>
    </location>
</feature>
<feature type="active site" description="For 3CLpro activity" evidence="11">
    <location>
        <position position="1025"/>
    </location>
</feature>
<feature type="active site" description="For 3CLpro activity" evidence="11">
    <location>
        <position position="1039"/>
    </location>
</feature>
<feature type="active site" description="For 3CLpro activity" evidence="11">
    <location>
        <position position="1103"/>
    </location>
</feature>
<feature type="binding site" evidence="10">
    <location>
        <begin position="456"/>
        <end position="463"/>
    </location>
    <ligand>
        <name>ATP</name>
        <dbReference type="ChEBI" id="CHEBI:30616"/>
    </ligand>
</feature>
<feature type="site" description="Cleavage; by 3CLpro" evidence="8">
    <location>
        <begin position="302"/>
        <end position="303"/>
    </location>
</feature>
<feature type="site" description="Cleavage; by 3CLpro" evidence="8">
    <location>
        <begin position="645"/>
        <end position="646"/>
    </location>
</feature>
<feature type="site" description="Cleavage; by 3CLpro" evidence="8">
    <location>
        <begin position="925"/>
        <end position="926"/>
    </location>
</feature>
<feature type="site" description="Cleavage; by 3CLpro" evidence="8">
    <location>
        <begin position="990"/>
        <end position="991"/>
    </location>
</feature>
<feature type="site" description="Cleavage; by 3CLpro" evidence="8">
    <location>
        <begin position="1174"/>
        <end position="1175"/>
    </location>
</feature>
<feature type="site" description="Cleavage; by 3CLpro" evidence="8">
    <location>
        <begin position="1659"/>
        <end position="1660"/>
    </location>
</feature>
<feature type="modified residue" description="O-(5'-phospho-RNA)-tyrosine" evidence="3">
    <location>
        <position position="940"/>
    </location>
</feature>
<protein>
    <recommendedName>
        <fullName>Genome polyprotein</fullName>
    </recommendedName>
    <component>
        <recommendedName>
            <fullName>Protein p34</fullName>
        </recommendedName>
    </component>
    <component>
        <recommendedName>
            <fullName>NTPase</fullName>
            <ecNumber evidence="5">3.6.1.15</ecNumber>
        </recommendedName>
        <alternativeName>
            <fullName>p37</fullName>
        </alternativeName>
    </component>
    <component>
        <recommendedName>
            <fullName>Protein p30</fullName>
        </recommendedName>
    </component>
    <component>
        <recommendedName>
            <fullName>Viral genome-linked protein</fullName>
        </recommendedName>
        <alternativeName>
            <fullName>VPg</fullName>
        </alternativeName>
        <alternativeName>
            <fullName>p8</fullName>
        </alternativeName>
    </component>
    <component>
        <recommendedName>
            <fullName>3C-like protease</fullName>
            <shortName>3CLpro</shortName>
            <ecNumber>3.4.22.66</ecNumber>
        </recommendedName>
        <alternativeName>
            <fullName>p20</fullName>
        </alternativeName>
    </component>
    <component>
        <recommendedName>
            <fullName>RNA-directed RNA polymerase</fullName>
            <shortName>RdRp</shortName>
            <ecNumber>2.7.7.48</ecNumber>
        </recommendedName>
        <alternativeName>
            <fullName>p53</fullName>
        </alternativeName>
    </component>
    <component>
        <recommendedName>
            <fullName>Capsid protein</fullName>
        </recommendedName>
        <alternativeName>
            <fullName>VP1</fullName>
        </alternativeName>
    </component>
</protein>
<evidence type="ECO:0000250" key="1"/>
<evidence type="ECO:0000250" key="2">
    <source>
        <dbReference type="UniProtKB" id="P27409"/>
    </source>
</evidence>
<evidence type="ECO:0000250" key="3">
    <source>
        <dbReference type="UniProtKB" id="P27410"/>
    </source>
</evidence>
<evidence type="ECO:0000250" key="4">
    <source>
        <dbReference type="UniProtKB" id="P54634"/>
    </source>
</evidence>
<evidence type="ECO:0000250" key="5">
    <source>
        <dbReference type="UniProtKB" id="Q04544"/>
    </source>
</evidence>
<evidence type="ECO:0000250" key="6">
    <source>
        <dbReference type="UniProtKB" id="Q66914"/>
    </source>
</evidence>
<evidence type="ECO:0000250" key="7">
    <source>
        <dbReference type="UniProtKB" id="Q86119"/>
    </source>
</evidence>
<evidence type="ECO:0000255" key="8"/>
<evidence type="ECO:0000255" key="9">
    <source>
        <dbReference type="PROSITE-ProRule" id="PRU00539"/>
    </source>
</evidence>
<evidence type="ECO:0000255" key="10">
    <source>
        <dbReference type="PROSITE-ProRule" id="PRU00551"/>
    </source>
</evidence>
<evidence type="ECO:0000255" key="11">
    <source>
        <dbReference type="PROSITE-ProRule" id="PRU01242"/>
    </source>
</evidence>
<evidence type="ECO:0000256" key="12">
    <source>
        <dbReference type="SAM" id="MobiDB-lite"/>
    </source>
</evidence>
<evidence type="ECO:0000305" key="13"/>
<accession>Q288N7</accession>
<keyword id="KW-0067">ATP-binding</keyword>
<keyword id="KW-0167">Capsid protein</keyword>
<keyword id="KW-0191">Covalent protein-RNA linkage</keyword>
<keyword id="KW-0347">Helicase</keyword>
<keyword id="KW-1035">Host cytoplasm</keyword>
<keyword id="KW-0378">Hydrolase</keyword>
<keyword id="KW-0547">Nucleotide-binding</keyword>
<keyword id="KW-0548">Nucleotidyltransferase</keyword>
<keyword id="KW-0597">Phosphoprotein</keyword>
<keyword id="KW-0645">Protease</keyword>
<keyword id="KW-1185">Reference proteome</keyword>
<keyword id="KW-0696">RNA-directed RNA polymerase</keyword>
<keyword id="KW-0788">Thiol protease</keyword>
<keyword id="KW-0808">Transferase</keyword>
<keyword id="KW-0693">Viral RNA replication</keyword>
<keyword id="KW-0946">Virion</keyword>
<reference key="1">
    <citation type="journal article" date="2006" name="Virology">
        <title>Genomic characterization of the unclassified bovine enteric virus Newbury agent-1 (Newbury1) endorses a new genus in the family Caliciviridae.</title>
        <authorList>
            <person name="Oliver S.L."/>
            <person name="Asobayire E."/>
            <person name="Dastjerdi A.M."/>
            <person name="Bridger J.C."/>
        </authorList>
    </citation>
    <scope>NUCLEOTIDE SEQUENCE [GENOMIC RNA]</scope>
</reference>
<reference key="2">
    <citation type="journal article" date="2021" name="Front. Microbiol.">
        <title>Calicivirus Non-structural Proteins: Potential Functions in Replication and Host Cell Manipulation.</title>
        <authorList>
            <person name="Smertina E."/>
            <person name="Hall R.N."/>
            <person name="Urakova N."/>
            <person name="Strive T."/>
            <person name="Frese M."/>
        </authorList>
    </citation>
    <scope>REVIEW</scope>
</reference>
<comment type="function">
    <molecule>NTPase</molecule>
    <text evidence="4 5 6">Displays NTPase activity, but no helicase activity (By similarity). Induces the formation of convoluted membranes derived from the host ER (By similarity). These remodeled membranes probably form the viral factories that contain the replication complex (By similarity). Together with NS2 and NS4, initiates the formation of the replication complex (By similarity).</text>
</comment>
<comment type="function">
    <molecule>Viral genome-linked protein</molecule>
    <text evidence="2">Viral genome-linked protein is covalently linked to the 5'-end of the positive-strand, negative-strand genomic RNAs and subgenomic RNA. Acts as a genome-linked replication primer. May recruit ribosome to viral RNA thereby promoting viral proteins translation. Interacts with host translation initiation complex to allow the translation of viral proteins.</text>
</comment>
<comment type="function">
    <molecule>3C-like protease</molecule>
    <text evidence="9">Processes the polyprotein. 3CLpro-RdRp is first released by autocleavage, then all other proteins are cleaved. May cleave polyadenylate-binding protein thereby inhibiting cellular translation.</text>
</comment>
<comment type="function">
    <molecule>RNA-directed RNA polymerase</molecule>
    <text evidence="7">Replicates genomic and antigenomic RNA by recognizing replications specific signals. Also transcribes a subgenomic mRNA by initiating RNA synthesis internally on antigenomic RNA. This sgRNA codes for structural proteins. Catalyzes the covalent attachment VPg with viral RNAs (By similarity).</text>
</comment>
<comment type="function">
    <molecule>Capsid protein</molecule>
    <text evidence="1 7">Capsid protein self assembles to form an icosahedral capsid with a T=3 symmetry, about 35 nm in diameter, and consisting of 180 capsid proteins. A smaller form of capsid with a diameter of 23 nm might be capsid proteins assembled as icosahedron with T=1 symmetry. The capsid encapsulate VP2 proteins and genomic or subgenomic RNA. Attaches virion to target cells by binding histo-blood group antigens, inducing endocytosis of the viral particle (By similarity). Acidification of the endosome induces conformational change of capsid protein thereby injecting virus genomic RNA into host cytoplasm (By similarity).</text>
</comment>
<comment type="catalytic activity">
    <molecule>NTPase</molecule>
    <reaction evidence="5">
        <text>a ribonucleoside 5'-triphosphate + H2O = a ribonucleoside 5'-diphosphate + phosphate + H(+)</text>
        <dbReference type="Rhea" id="RHEA:23680"/>
        <dbReference type="ChEBI" id="CHEBI:15377"/>
        <dbReference type="ChEBI" id="CHEBI:15378"/>
        <dbReference type="ChEBI" id="CHEBI:43474"/>
        <dbReference type="ChEBI" id="CHEBI:57930"/>
        <dbReference type="ChEBI" id="CHEBI:61557"/>
        <dbReference type="EC" id="3.6.1.15"/>
    </reaction>
</comment>
<comment type="catalytic activity">
    <molecule>3C-like protease</molecule>
    <reaction evidence="11">
        <text>Endopeptidase with a preference for cleavage when the P1 position is occupied by Glu-|-Xaa and the P1' position is occupied by Gly-|-Yaa.</text>
        <dbReference type="EC" id="3.4.22.66"/>
    </reaction>
</comment>
<comment type="catalytic activity">
    <molecule>RNA-directed RNA polymerase</molecule>
    <reaction evidence="9">
        <text>RNA(n) + a ribonucleoside 5'-triphosphate = RNA(n+1) + diphosphate</text>
        <dbReference type="Rhea" id="RHEA:21248"/>
        <dbReference type="Rhea" id="RHEA-COMP:14527"/>
        <dbReference type="Rhea" id="RHEA-COMP:17342"/>
        <dbReference type="ChEBI" id="CHEBI:33019"/>
        <dbReference type="ChEBI" id="CHEBI:61557"/>
        <dbReference type="ChEBI" id="CHEBI:140395"/>
        <dbReference type="EC" id="2.7.7.48"/>
    </reaction>
</comment>
<comment type="subcellular location">
    <molecule>Capsid protein</molecule>
    <subcellularLocation>
        <location>Virion</location>
    </subcellularLocation>
    <subcellularLocation>
        <location evidence="13">Host cytoplasm</location>
    </subcellularLocation>
</comment>
<comment type="PTM">
    <molecule>Genome polyprotein</molecule>
    <text evidence="3">Specific enzymatic cleavages by its own cysteine protease yield mature proteins (By similarity). The protease cleaves itself from the nascent polyprotein autocatalytically. Precursor p41 can be cleaved by viral 3CLpro into protein p19 and VPg, or cleaved by host protease into protein p23/2 and protein p18 (By similarity).</text>
</comment>
<comment type="PTM">
    <molecule>Viral genome-linked protein</molecule>
    <text evidence="6">VPg is uridylylated by the polymerase and is covalently attached to the 5'-end of the polyadenylated genomic and subgenomic RNAs. This uridylylated form acts as a nucleotide-peptide primer for the polymerase.</text>
</comment>
<name>POLG_BECN1</name>
<proteinExistence type="inferred from homology"/>
<gene>
    <name type="ORF">ORF1</name>
</gene>
<sequence>MAPVVSRDRHRHKIPKPHQPAPPHRCTVWCPEDCGWYVGRCSCPKSCQREGWDDFFVADKVKPPSYVASKTSVADVVDWLLEEDPATDGPSEFDLTQFFQAYTDKSHQIHRDYAPDQLAQALDMAYILSVDPPDIKLPEYEATRFTHDTSYKGKLPRWLRVYGFKSRELAKKAITNIKGGAHWAKGLFKQAWDTLPGWSEVEAYFKAFFAGIITGVEDALSKSPSSVWTSLKLTPLLYIWRNINECSDIPVILGAFWATLELYNIPSKVYDLVSTALGPMVQDLARRVINIIKGDGNGPKQEGGRPSFSIPGVLLATFLSAIILGSMPSDGIIKKVLRGCATAAGLVGGFNAVKSIITTVQGASACKDVKKLASQLMCVTTMAATVSTRGERQVLASMLNDLNESVRERLVDPAFAALVPQLSAMSSKIMELSTINAAALSAARKRVPAKIVVLCGPPGHGKSVAAHKLAKMLNPNEPSIWNPFSDHHDEYTAEDVVIIDETPAEPGQWVEDLIAMGSNSPFVPNYDRVENKTRCFDSKYVLITTNHNPLINPTHSRAAALARRLTWVYVNSPDVADFLRQHPGVAPPATLFKADCSHLNFDIHPYNSIGTTAVVGHNGTTPLPRAKRTSLEGLCKHIKDLPDREGPPDGVPERMVLVAPDKGTARFVEAVINTYHNSGLVAQPAAWDTTPQKYQLAVTWQGSTSSVVGQRWDCNPQTPFVAPHFTRNMFKRVLGTEVPEYHLLAYACRITSSSLGDKSLPVPNPTVVINDPSPTRLALALMRHLKNPIASGLRVVWDLFRGCATGPKRLFTWALSQEWNPMPVTTAFTFPAGTVILHTAGGVRVVVLPPGPQFGLTEVTHLADHSGQDDPVVPDMFGQTWTELLWRLLKVIGTFLANYGVAIAGLTLSIAAFKTANKSTRNDRQGWLSGSGVALSDEEYDEWMKYSKKKGKKINADEFLQLRHRAAMGNDDDDARDYRSFYTAYQLGREGNNCEDLPLHPAVGPTTGGGYYVHIGNGVGITLKHVASGEDVIKELGNDLVKIRARHHKMGDPAMVVGEGAPVKFVTGHLVVDARNESVVFDQTRLSVVRVKVPGLETQRGYCGLPYVNSAGHVVGLHQGSYGVGDKVFTPITDAPAASPDTIMWRGLECTRSDIVTHLPHGTKYSISPGMREEAHKCTHQPASLGRNDPRCNQTQVAMVVKALTPYTSAPAIEKLDPCMVAAITEVRTAIQSLTPKGGFRPLTFAAAWQSLDLSTSAGALAPGKTKRDLCDPDTGMPAGKYREMLLAAWSRAGTGTPLDHTYIVALKDELRPVEKVAEGKRRLIWGADARVALIASAALTPVANALKTVTNLLPIQVGVDPSSANCVSSWVGRLQRHDHCLELDYSKWDSTMSPVIINIAIDILCNTCGSDSLRMAVAQTLKSRPTALVEGVSVPTKSGLPSGMPFTSQINSIVHWILWSATVRKCSLPLHIGSVNELAPFLTYGDDGLYTIPSHLTKSIDEIISTLKGYGLSPTAPDKGANVEIKRTSFTYLSGPVFLKRRIVLTPGGHRALLDLTSLARQPVWVNGPRRSVWNHEAQPIEIDAETRTIQLQNVLIELAWHQPQDFDHVLALVVKSAEASGLTIPRYSQEEARAIYDGRYYGIQHVSLPNNSDLIREGNMSDNKSTPEQQHESSRAMDAGATGAAAAAPAPPVAAAPASGLVGALVAEPQSGPSAEQWRTAYTLFGTVSWNANAGPGTILTVGRLGPGMNPYTQHIAAMYGGWAGGMDIRITIAGSGFIGGTLAVAAIPPGVDPESVNVLRMPHVLIDARGGVPLEVTLEDIRTSLYHPMGDTNTASLVIAVMTGLINPLGTDTLSVTVQLETRPGRDWVFFSLLPPTAGVASADPSQLLTRVALATSPEVRFGTGVLGILGLPSNPSVNRVYDVQSRTRGWSFPIPSSSVFMGDARNVEHNRRVMVQSSAPNNPLSDVFPDGFPDFVPQSDTEPDGGAVIAGQVLPHPGDNDNFWRLTPVVRGNTTAAINTIPERFNQVYFINLADEEAVSAATEELRFNGIQGIFGQRTNARAVQVMQGYVPRAEHIIRPAGFAGVGPQGPNVPIGFAGTMPNFNATASGADDLVPVWGPTLVHTASLLAGTTYELAENSMYVFSVSTSTSTFELGMLANGTWLGPAQLAGTGITWTEVLSVTYMGMRFAYNPLSGQGIGGESRRL</sequence>
<organism>
    <name type="scientific">Bovine enteric calicivirus Newbury agent-1 (isolate Bovine/UK/Newbury1/1976)</name>
    <name type="common">BEC</name>
    <dbReference type="NCBI Taxonomy" id="331642"/>
    <lineage>
        <taxon>Viruses</taxon>
        <taxon>Riboviria</taxon>
        <taxon>Orthornavirae</taxon>
        <taxon>Pisuviricota</taxon>
        <taxon>Pisoniviricetes</taxon>
        <taxon>Picornavirales</taxon>
        <taxon>Caliciviridae</taxon>
        <taxon>Nebovirus</taxon>
        <taxon>Newbury 1 virus</taxon>
    </lineage>
</organism>